<comment type="subcellular location">
    <subcellularLocation>
        <location>Mitochondrion</location>
    </subcellularLocation>
</comment>
<comment type="similarity">
    <text evidence="1">Belongs to the universal ribosomal protein uL2 family.</text>
</comment>
<evidence type="ECO:0000305" key="1"/>
<protein>
    <recommendedName>
        <fullName evidence="1">Large ribosomal subunit protein uL2m</fullName>
    </recommendedName>
    <alternativeName>
        <fullName>60S ribosomal protein L2, mitochondrial</fullName>
    </alternativeName>
</protein>
<dbReference type="EMBL" id="DQ336395">
    <property type="protein sequence ID" value="ABC60374.1"/>
    <property type="molecule type" value="Genomic_DNA"/>
</dbReference>
<dbReference type="SMR" id="Q2LCR9"/>
<dbReference type="GO" id="GO:0005762">
    <property type="term" value="C:mitochondrial large ribosomal subunit"/>
    <property type="evidence" value="ECO:0007669"/>
    <property type="project" value="TreeGrafter"/>
</dbReference>
<dbReference type="GO" id="GO:0003723">
    <property type="term" value="F:RNA binding"/>
    <property type="evidence" value="ECO:0007669"/>
    <property type="project" value="InterPro"/>
</dbReference>
<dbReference type="GO" id="GO:0003735">
    <property type="term" value="F:structural constituent of ribosome"/>
    <property type="evidence" value="ECO:0007669"/>
    <property type="project" value="InterPro"/>
</dbReference>
<dbReference type="GO" id="GO:0016740">
    <property type="term" value="F:transferase activity"/>
    <property type="evidence" value="ECO:0007669"/>
    <property type="project" value="InterPro"/>
</dbReference>
<dbReference type="GO" id="GO:0032543">
    <property type="term" value="P:mitochondrial translation"/>
    <property type="evidence" value="ECO:0007669"/>
    <property type="project" value="TreeGrafter"/>
</dbReference>
<dbReference type="Gene3D" id="2.30.30.30">
    <property type="match status" value="1"/>
</dbReference>
<dbReference type="Gene3D" id="2.40.50.140">
    <property type="entry name" value="Nucleic acid-binding proteins"/>
    <property type="match status" value="1"/>
</dbReference>
<dbReference type="Gene3D" id="4.10.950.10">
    <property type="entry name" value="Ribosomal protein L2, domain 3"/>
    <property type="match status" value="1"/>
</dbReference>
<dbReference type="InterPro" id="IPR012340">
    <property type="entry name" value="NA-bd_OB-fold"/>
</dbReference>
<dbReference type="InterPro" id="IPR014722">
    <property type="entry name" value="Rib_uL2_dom2"/>
</dbReference>
<dbReference type="InterPro" id="IPR002171">
    <property type="entry name" value="Ribosomal_uL2"/>
</dbReference>
<dbReference type="InterPro" id="IPR005880">
    <property type="entry name" value="Ribosomal_uL2_bac/org-type"/>
</dbReference>
<dbReference type="InterPro" id="IPR022669">
    <property type="entry name" value="Ribosomal_uL2_C"/>
</dbReference>
<dbReference type="InterPro" id="IPR014726">
    <property type="entry name" value="Ribosomal_uL2_dom3"/>
</dbReference>
<dbReference type="InterPro" id="IPR022666">
    <property type="entry name" value="Ribosomal_uL2_RNA-bd_dom"/>
</dbReference>
<dbReference type="InterPro" id="IPR008991">
    <property type="entry name" value="Translation_prot_SH3-like_sf"/>
</dbReference>
<dbReference type="NCBIfam" id="TIGR01171">
    <property type="entry name" value="rplB_bact"/>
    <property type="match status" value="1"/>
</dbReference>
<dbReference type="PANTHER" id="PTHR13691:SF5">
    <property type="entry name" value="LARGE RIBOSOMAL SUBUNIT PROTEIN UL2M"/>
    <property type="match status" value="1"/>
</dbReference>
<dbReference type="PANTHER" id="PTHR13691">
    <property type="entry name" value="RIBOSOMAL PROTEIN L2"/>
    <property type="match status" value="1"/>
</dbReference>
<dbReference type="Pfam" id="PF00181">
    <property type="entry name" value="Ribosomal_L2"/>
    <property type="match status" value="1"/>
</dbReference>
<dbReference type="Pfam" id="PF03947">
    <property type="entry name" value="Ribosomal_L2_C"/>
    <property type="match status" value="1"/>
</dbReference>
<dbReference type="PIRSF" id="PIRSF002158">
    <property type="entry name" value="Ribosomal_L2"/>
    <property type="match status" value="1"/>
</dbReference>
<dbReference type="SMART" id="SM01383">
    <property type="entry name" value="Ribosomal_L2"/>
    <property type="match status" value="1"/>
</dbReference>
<dbReference type="SMART" id="SM01382">
    <property type="entry name" value="Ribosomal_L2_C"/>
    <property type="match status" value="1"/>
</dbReference>
<dbReference type="SUPFAM" id="SSF50249">
    <property type="entry name" value="Nucleic acid-binding proteins"/>
    <property type="match status" value="1"/>
</dbReference>
<dbReference type="SUPFAM" id="SSF50104">
    <property type="entry name" value="Translation proteins SH3-like domain"/>
    <property type="match status" value="1"/>
</dbReference>
<proteinExistence type="inferred from homology"/>
<sequence length="266" mass="30364">MVLNWRGVKSRLYSGKRRIDGRNKGLIAIRARGGALKRKYRYIEHYKQKWMDKWLFVMRIEYDPNRSAHIALCSILKEGIYFYVISVAKLEVGSLIITSNLKQGILQVGYTTKIKNIPEGILINNIELMENSGSKLSRAAGTSSLIIKQYNKKYSLVKLSSKECRLISNECYATIGTVSNIEKKIKKSKKASESRKKGIRPIVRGLAMNPVDHPHGGRTKGGMHWKSFSGKLAYNISSRKKTKMSSRYIIIGHRKQRLMDKKKKNG</sequence>
<geneLocation type="mitochondrion"/>
<reference key="1">
    <citation type="journal article" date="2008" name="Mol. Biol. Evol.">
        <title>Mitochondrial genome evolution in the social amoebae.</title>
        <authorList>
            <person name="Heidel A.J."/>
            <person name="Gloeckner G."/>
        </authorList>
    </citation>
    <scope>NUCLEOTIDE SEQUENCE [LARGE SCALE GENOMIC DNA]</scope>
</reference>
<keyword id="KW-0496">Mitochondrion</keyword>
<keyword id="KW-0687">Ribonucleoprotein</keyword>
<keyword id="KW-0689">Ribosomal protein</keyword>
<name>RM02_DICCI</name>
<accession>Q2LCR9</accession>
<feature type="chain" id="PRO_0000312425" description="Large ribosomal subunit protein uL2m">
    <location>
        <begin position="1"/>
        <end position="266"/>
    </location>
</feature>
<gene>
    <name type="primary">mrpl2</name>
    <name type="synonym">rpl2</name>
</gene>
<organism>
    <name type="scientific">Dictyostelium citrinum</name>
    <name type="common">Slime mold</name>
    <dbReference type="NCBI Taxonomy" id="361072"/>
    <lineage>
        <taxon>Eukaryota</taxon>
        <taxon>Amoebozoa</taxon>
        <taxon>Evosea</taxon>
        <taxon>Eumycetozoa</taxon>
        <taxon>Dictyostelia</taxon>
        <taxon>Dictyosteliales</taxon>
        <taxon>Dictyosteliaceae</taxon>
        <taxon>Dictyostelium</taxon>
    </lineage>
</organism>